<reference key="1">
    <citation type="journal article" date="2000" name="Nucleic Acids Res.">
        <title>Genome sequences of Chlamydia trachomatis MoPn and Chlamydia pneumoniae AR39.</title>
        <authorList>
            <person name="Read T.D."/>
            <person name="Brunham R.C."/>
            <person name="Shen C."/>
            <person name="Gill S.R."/>
            <person name="Heidelberg J.F."/>
            <person name="White O."/>
            <person name="Hickey E.K."/>
            <person name="Peterson J.D."/>
            <person name="Utterback T.R."/>
            <person name="Berry K.J."/>
            <person name="Bass S."/>
            <person name="Linher K.D."/>
            <person name="Weidman J.F."/>
            <person name="Khouri H.M."/>
            <person name="Craven B."/>
            <person name="Bowman C."/>
            <person name="Dodson R.J."/>
            <person name="Gwinn M.L."/>
            <person name="Nelson W.C."/>
            <person name="DeBoy R.T."/>
            <person name="Kolonay J.F."/>
            <person name="McClarty G."/>
            <person name="Salzberg S.L."/>
            <person name="Eisen J.A."/>
            <person name="Fraser C.M."/>
        </authorList>
    </citation>
    <scope>NUCLEOTIDE SEQUENCE [LARGE SCALE GENOMIC DNA]</scope>
    <source>
        <strain>MoPn / Nigg</strain>
    </source>
</reference>
<comment type="similarity">
    <text evidence="1">Belongs to the UbiD family.</text>
</comment>
<accession>Q9PKV2</accession>
<sequence length="579" mass="65536">MFSLRSLVDYLRVQRELIDIYTPVDPYLEIAEIHRRVVENEGPALLFHHVKGSPFPVLTNLFGTQKRVDLLFPDLSSGIFDQIAILLSSPPSFSSLWQHRSLLKRGLSSLGLRKQRFRPSPFLHQDAPNLLQLPMLTSWPEDGGPFLTLPLVYTQSPENGIPNLGMYRMQRFDEQTLGLHFQIQKGGGAHFFEAEQKQQNLPVTIFLSGNPFLILSAIAPLPENVPELLFCSFLQNKKLSFVKKAPLSNHPLLCDAEFILTGEALAGKRRPEGPFGDHFGYYSLTHDFPIFNCQHLYHKKDAIYPATIVGKPFQEDFFLGNKLQEILSPLFPLIMPGVQDLKSYGEAGFHAVAAAVVKERYWKEALRSALRILGEGQLSLTKFLWITDQSVDLNNFPSLLECVLKRMRFDQDLIIISDTANDTLDYTGPALNKGSRGIFLGVGTPIRSLPRHYQGPSLPGVSRIGVFCXGCLVLETSIQQINIPLLLKESHLEQWPLIVLVEDLSKTLSDTKEFLWRTFTRSSPATDLHIPVSHVTNHKISYRPPMILNALMKPSYPKEVEADEETKKHVSSRWDKYFS</sequence>
<organism>
    <name type="scientific">Chlamydia muridarum (strain MoPn / Nigg)</name>
    <dbReference type="NCBI Taxonomy" id="243161"/>
    <lineage>
        <taxon>Bacteria</taxon>
        <taxon>Pseudomonadati</taxon>
        <taxon>Chlamydiota</taxon>
        <taxon>Chlamydiia</taxon>
        <taxon>Chlamydiales</taxon>
        <taxon>Chlamydiaceae</taxon>
        <taxon>Chlamydia/Chlamydophila group</taxon>
        <taxon>Chlamydia</taxon>
    </lineage>
</organism>
<evidence type="ECO:0000305" key="1"/>
<gene>
    <name type="ordered locus">TC_0359</name>
</gene>
<dbReference type="EMBL" id="AE002160">
    <property type="protein sequence ID" value="AAF39220.1"/>
    <property type="molecule type" value="Genomic_DNA"/>
</dbReference>
<dbReference type="PIR" id="F81711">
    <property type="entry name" value="F81711"/>
</dbReference>
<dbReference type="RefSeq" id="WP_010904323.1">
    <property type="nucleotide sequence ID" value="NC_002620.2"/>
</dbReference>
<dbReference type="GeneID" id="1245712"/>
<dbReference type="KEGG" id="cmu:TC_0359"/>
<dbReference type="PATRIC" id="fig|243161.6.peg.385"/>
<dbReference type="eggNOG" id="COG0043">
    <property type="taxonomic scope" value="Bacteria"/>
</dbReference>
<dbReference type="HOGENOM" id="CLU_023348_4_1_0"/>
<dbReference type="Proteomes" id="UP000000800">
    <property type="component" value="Chromosome"/>
</dbReference>
<dbReference type="GO" id="GO:0005737">
    <property type="term" value="C:cytoplasm"/>
    <property type="evidence" value="ECO:0007669"/>
    <property type="project" value="TreeGrafter"/>
</dbReference>
<dbReference type="GO" id="GO:0016831">
    <property type="term" value="F:carboxy-lyase activity"/>
    <property type="evidence" value="ECO:0007669"/>
    <property type="project" value="InterPro"/>
</dbReference>
<dbReference type="Gene3D" id="3.40.1670.10">
    <property type="entry name" value="UbiD C-terminal domain-like"/>
    <property type="match status" value="1"/>
</dbReference>
<dbReference type="InterPro" id="IPR022390">
    <property type="entry name" value="HBDC"/>
</dbReference>
<dbReference type="InterPro" id="IPR002830">
    <property type="entry name" value="UbiD"/>
</dbReference>
<dbReference type="InterPro" id="IPR049381">
    <property type="entry name" value="UbiD-like_C"/>
</dbReference>
<dbReference type="InterPro" id="IPR049383">
    <property type="entry name" value="UbiD-like_N"/>
</dbReference>
<dbReference type="InterPro" id="IPR048304">
    <property type="entry name" value="UbiD_Rift_dom"/>
</dbReference>
<dbReference type="NCBIfam" id="TIGR03701">
    <property type="entry name" value="mena_SCO4490"/>
    <property type="match status" value="1"/>
</dbReference>
<dbReference type="NCBIfam" id="TIGR00148">
    <property type="entry name" value="UbiD family decarboxylase"/>
    <property type="match status" value="1"/>
</dbReference>
<dbReference type="PANTHER" id="PTHR30108">
    <property type="entry name" value="3-OCTAPRENYL-4-HYDROXYBENZOATE CARBOXY-LYASE-RELATED"/>
    <property type="match status" value="1"/>
</dbReference>
<dbReference type="PANTHER" id="PTHR30108:SF7">
    <property type="entry name" value="3-POLYPRENYL-4-HYDROXYBENZOATE DECARBOXYLASE"/>
    <property type="match status" value="1"/>
</dbReference>
<dbReference type="Pfam" id="PF01977">
    <property type="entry name" value="UbiD"/>
    <property type="match status" value="1"/>
</dbReference>
<dbReference type="Pfam" id="PF20696">
    <property type="entry name" value="UbiD_C"/>
    <property type="match status" value="1"/>
</dbReference>
<dbReference type="Pfam" id="PF20695">
    <property type="entry name" value="UbiD_N"/>
    <property type="match status" value="1"/>
</dbReference>
<dbReference type="SUPFAM" id="SSF50475">
    <property type="entry name" value="FMN-binding split barrel"/>
    <property type="match status" value="1"/>
</dbReference>
<dbReference type="SUPFAM" id="SSF143968">
    <property type="entry name" value="UbiD C-terminal domain-like"/>
    <property type="match status" value="2"/>
</dbReference>
<name>Y359_CHLMU</name>
<proteinExistence type="inferred from homology"/>
<protein>
    <recommendedName>
        <fullName>Uncharacterized protein TC_0359</fullName>
    </recommendedName>
</protein>
<feature type="chain" id="PRO_0000157371" description="Uncharacterized protein TC_0359">
    <location>
        <begin position="1"/>
        <end position="579"/>
    </location>
</feature>